<accession>P57171</accession>
<feature type="chain" id="PRO_0000167083" description="Cysteine synthase">
    <location>
        <begin position="1"/>
        <end position="315"/>
    </location>
</feature>
<feature type="binding site" evidence="2">
    <location>
        <position position="8"/>
    </location>
    <ligand>
        <name>hydrogen sulfide</name>
        <dbReference type="ChEBI" id="CHEBI:29919"/>
        <note>allosteric inhibitor; ligand shared between dimeric partners</note>
    </ligand>
</feature>
<feature type="binding site" description="in other chain" evidence="2">
    <location>
        <position position="35"/>
    </location>
    <ligand>
        <name>hydrogen sulfide</name>
        <dbReference type="ChEBI" id="CHEBI:29919"/>
        <note>allosteric inhibitor; ligand shared between dimeric partners</note>
    </ligand>
</feature>
<feature type="binding site" evidence="1">
    <location>
        <position position="72"/>
    </location>
    <ligand>
        <name>pyridoxal 5'-phosphate</name>
        <dbReference type="ChEBI" id="CHEBI:597326"/>
    </ligand>
</feature>
<feature type="binding site" evidence="1">
    <location>
        <begin position="177"/>
        <end position="181"/>
    </location>
    <ligand>
        <name>pyridoxal 5'-phosphate</name>
        <dbReference type="ChEBI" id="CHEBI:597326"/>
    </ligand>
</feature>
<feature type="binding site" description="in other chain" evidence="2">
    <location>
        <position position="269"/>
    </location>
    <ligand>
        <name>hydrogen sulfide</name>
        <dbReference type="ChEBI" id="CHEBI:29919"/>
        <note>allosteric inhibitor; ligand shared between dimeric partners</note>
    </ligand>
</feature>
<feature type="binding site" evidence="1">
    <location>
        <position position="273"/>
    </location>
    <ligand>
        <name>pyridoxal 5'-phosphate</name>
        <dbReference type="ChEBI" id="CHEBI:597326"/>
    </ligand>
</feature>
<feature type="modified residue" description="N6-(pyridoxal phosphate)lysine" evidence="1">
    <location>
        <position position="42"/>
    </location>
</feature>
<proteinExistence type="inferred from homology"/>
<reference key="1">
    <citation type="journal article" date="2000" name="Nature">
        <title>Genome sequence of the endocellular bacterial symbiont of aphids Buchnera sp. APS.</title>
        <authorList>
            <person name="Shigenobu S."/>
            <person name="Watanabe H."/>
            <person name="Hattori M."/>
            <person name="Sakaki Y."/>
            <person name="Ishikawa H."/>
        </authorList>
    </citation>
    <scope>NUCLEOTIDE SEQUENCE [LARGE SCALE GENOMIC DNA]</scope>
    <source>
        <strain>APS</strain>
    </source>
</reference>
<name>CYSK_BUCAI</name>
<gene>
    <name type="primary">cysK</name>
    <name type="ordered locus">BU066</name>
</gene>
<evidence type="ECO:0000250" key="1"/>
<evidence type="ECO:0000250" key="2">
    <source>
        <dbReference type="UniProtKB" id="P0A1E3"/>
    </source>
</evidence>
<evidence type="ECO:0000305" key="3"/>
<dbReference type="EC" id="2.5.1.47"/>
<dbReference type="EMBL" id="BA000003">
    <property type="protein sequence ID" value="BAB12789.1"/>
    <property type="molecule type" value="Genomic_DNA"/>
</dbReference>
<dbReference type="RefSeq" id="NP_239903.1">
    <property type="nucleotide sequence ID" value="NC_002528.1"/>
</dbReference>
<dbReference type="RefSeq" id="WP_010895923.1">
    <property type="nucleotide sequence ID" value="NZ_AP036055.1"/>
</dbReference>
<dbReference type="SMR" id="P57171"/>
<dbReference type="STRING" id="563178.BUAP5A_065"/>
<dbReference type="EnsemblBacteria" id="BAB12789">
    <property type="protein sequence ID" value="BAB12789"/>
    <property type="gene ID" value="BAB12789"/>
</dbReference>
<dbReference type="KEGG" id="buc:BU066"/>
<dbReference type="PATRIC" id="fig|107806.10.peg.75"/>
<dbReference type="eggNOG" id="COG0031">
    <property type="taxonomic scope" value="Bacteria"/>
</dbReference>
<dbReference type="HOGENOM" id="CLU_021018_1_2_6"/>
<dbReference type="UniPathway" id="UPA00136">
    <property type="reaction ID" value="UER00200"/>
</dbReference>
<dbReference type="Proteomes" id="UP000001806">
    <property type="component" value="Chromosome"/>
</dbReference>
<dbReference type="GO" id="GO:0004124">
    <property type="term" value="F:cysteine synthase activity"/>
    <property type="evidence" value="ECO:0007669"/>
    <property type="project" value="UniProtKB-EC"/>
</dbReference>
<dbReference type="GO" id="GO:0006535">
    <property type="term" value="P:cysteine biosynthetic process from serine"/>
    <property type="evidence" value="ECO:0007669"/>
    <property type="project" value="InterPro"/>
</dbReference>
<dbReference type="CDD" id="cd01561">
    <property type="entry name" value="CBS_like"/>
    <property type="match status" value="1"/>
</dbReference>
<dbReference type="FunFam" id="3.40.50.1100:FF:000002">
    <property type="entry name" value="Cysteine synthase"/>
    <property type="match status" value="1"/>
</dbReference>
<dbReference type="FunFam" id="3.40.50.1100:FF:000006">
    <property type="entry name" value="Cysteine synthase"/>
    <property type="match status" value="1"/>
</dbReference>
<dbReference type="Gene3D" id="3.40.50.1100">
    <property type="match status" value="2"/>
</dbReference>
<dbReference type="InterPro" id="IPR005856">
    <property type="entry name" value="Cys_synth"/>
</dbReference>
<dbReference type="InterPro" id="IPR050214">
    <property type="entry name" value="Cys_Synth/Cystath_Beta-Synth"/>
</dbReference>
<dbReference type="InterPro" id="IPR005859">
    <property type="entry name" value="CysK"/>
</dbReference>
<dbReference type="InterPro" id="IPR001216">
    <property type="entry name" value="P-phosphate_BS"/>
</dbReference>
<dbReference type="InterPro" id="IPR001926">
    <property type="entry name" value="TrpB-like_PALP"/>
</dbReference>
<dbReference type="InterPro" id="IPR036052">
    <property type="entry name" value="TrpB-like_PALP_sf"/>
</dbReference>
<dbReference type="NCBIfam" id="TIGR01139">
    <property type="entry name" value="cysK"/>
    <property type="match status" value="1"/>
</dbReference>
<dbReference type="NCBIfam" id="TIGR01136">
    <property type="entry name" value="cysKM"/>
    <property type="match status" value="1"/>
</dbReference>
<dbReference type="PANTHER" id="PTHR10314">
    <property type="entry name" value="CYSTATHIONINE BETA-SYNTHASE"/>
    <property type="match status" value="1"/>
</dbReference>
<dbReference type="Pfam" id="PF00291">
    <property type="entry name" value="PALP"/>
    <property type="match status" value="1"/>
</dbReference>
<dbReference type="SUPFAM" id="SSF53686">
    <property type="entry name" value="Tryptophan synthase beta subunit-like PLP-dependent enzymes"/>
    <property type="match status" value="1"/>
</dbReference>
<dbReference type="PROSITE" id="PS00901">
    <property type="entry name" value="CYS_SYNTHASE"/>
    <property type="match status" value="1"/>
</dbReference>
<keyword id="KW-0021">Allosteric enzyme</keyword>
<keyword id="KW-0028">Amino-acid biosynthesis</keyword>
<keyword id="KW-0198">Cysteine biosynthesis</keyword>
<keyword id="KW-0663">Pyridoxal phosphate</keyword>
<keyword id="KW-1185">Reference proteome</keyword>
<keyword id="KW-0808">Transferase</keyword>
<organism>
    <name type="scientific">Buchnera aphidicola subsp. Acyrthosiphon pisum (strain APS)</name>
    <name type="common">Acyrthosiphon pisum symbiotic bacterium</name>
    <dbReference type="NCBI Taxonomy" id="107806"/>
    <lineage>
        <taxon>Bacteria</taxon>
        <taxon>Pseudomonadati</taxon>
        <taxon>Pseudomonadota</taxon>
        <taxon>Gammaproteobacteria</taxon>
        <taxon>Enterobacterales</taxon>
        <taxon>Erwiniaceae</taxon>
        <taxon>Buchnera</taxon>
    </lineage>
</organism>
<protein>
    <recommendedName>
        <fullName>Cysteine synthase</fullName>
        <shortName>CSase</shortName>
        <ecNumber>2.5.1.47</ecNumber>
    </recommendedName>
    <alternativeName>
        <fullName>O-acetylserine (thiol)-lyase</fullName>
        <shortName>OAS-TL</shortName>
    </alternativeName>
    <alternativeName>
        <fullName>O-acetylserine sulfhydrylase</fullName>
    </alternativeName>
</protein>
<comment type="catalytic activity">
    <reaction>
        <text>O-acetyl-L-serine + hydrogen sulfide = L-cysteine + acetate</text>
        <dbReference type="Rhea" id="RHEA:14829"/>
        <dbReference type="ChEBI" id="CHEBI:29919"/>
        <dbReference type="ChEBI" id="CHEBI:30089"/>
        <dbReference type="ChEBI" id="CHEBI:35235"/>
        <dbReference type="ChEBI" id="CHEBI:58340"/>
        <dbReference type="EC" id="2.5.1.47"/>
    </reaction>
</comment>
<comment type="cofactor">
    <cofactor evidence="1">
        <name>pyridoxal 5'-phosphate</name>
        <dbReference type="ChEBI" id="CHEBI:597326"/>
    </cofactor>
</comment>
<comment type="pathway">
    <text>Amino-acid biosynthesis; L-cysteine biosynthesis; L-cysteine from L-serine: step 2/2.</text>
</comment>
<comment type="subunit">
    <text evidence="1">Homodimer.</text>
</comment>
<comment type="similarity">
    <text evidence="3">Belongs to the cysteine synthase/cystathionine beta-synthase family.</text>
</comment>
<sequence>MSKIYQDNSLTIGNTPLVRLNRIGNGNILVKIESRNPSFSVKCRIGANMIWHAEKNNNINKNVKLIEATSGNTGIALAYVAASRNYRLTLTMPETMSIERKKILKSLGAELILTDGRYGMKGAISKANDIISRNPSKYFLLKQFENPANPEIHQITTGPEIWNDTNGNLDILISAVGTGGTITGITRYIKKIKRKKNLISIAVEPSESPVITQFLAGKAIEPGPHKIQGIGPGFIPKNLDLTIIDQVITVSSEEAILTAKELMKKEGILAGISSGAALYAAIKIQQQKKFSDKKIVVILPSSGERYLSTELFSEL</sequence>